<proteinExistence type="inferred from homology"/>
<organism>
    <name type="scientific">Mycobacterium sp. (strain KMS)</name>
    <dbReference type="NCBI Taxonomy" id="189918"/>
    <lineage>
        <taxon>Bacteria</taxon>
        <taxon>Bacillati</taxon>
        <taxon>Actinomycetota</taxon>
        <taxon>Actinomycetes</taxon>
        <taxon>Mycobacteriales</taxon>
        <taxon>Mycobacteriaceae</taxon>
        <taxon>Mycobacterium</taxon>
    </lineage>
</organism>
<accession>A1UIY9</accession>
<name>NADD_MYCSK</name>
<feature type="chain" id="PRO_0000336713" description="Probable nicotinate-nucleotide adenylyltransferase">
    <location>
        <begin position="1"/>
        <end position="204"/>
    </location>
</feature>
<reference key="1">
    <citation type="submission" date="2006-12" db="EMBL/GenBank/DDBJ databases">
        <title>Complete sequence of chromosome of Mycobacterium sp. KMS.</title>
        <authorList>
            <consortium name="US DOE Joint Genome Institute"/>
            <person name="Copeland A."/>
            <person name="Lucas S."/>
            <person name="Lapidus A."/>
            <person name="Barry K."/>
            <person name="Detter J.C."/>
            <person name="Glavina del Rio T."/>
            <person name="Hammon N."/>
            <person name="Israni S."/>
            <person name="Dalin E."/>
            <person name="Tice H."/>
            <person name="Pitluck S."/>
            <person name="Kiss H."/>
            <person name="Brettin T."/>
            <person name="Bruce D."/>
            <person name="Han C."/>
            <person name="Tapia R."/>
            <person name="Gilna P."/>
            <person name="Schmutz J."/>
            <person name="Larimer F."/>
            <person name="Land M."/>
            <person name="Hauser L."/>
            <person name="Kyrpides N."/>
            <person name="Mikhailova N."/>
            <person name="Miller C.D."/>
            <person name="Richardson P."/>
        </authorList>
    </citation>
    <scope>NUCLEOTIDE SEQUENCE [LARGE SCALE GENOMIC DNA]</scope>
    <source>
        <strain>KMS</strain>
    </source>
</reference>
<comment type="function">
    <text evidence="1">Catalyzes the reversible adenylation of nicotinate mononucleotide (NaMN) to nicotinic acid adenine dinucleotide (NaAD).</text>
</comment>
<comment type="catalytic activity">
    <reaction evidence="1">
        <text>nicotinate beta-D-ribonucleotide + ATP + H(+) = deamido-NAD(+) + diphosphate</text>
        <dbReference type="Rhea" id="RHEA:22860"/>
        <dbReference type="ChEBI" id="CHEBI:15378"/>
        <dbReference type="ChEBI" id="CHEBI:30616"/>
        <dbReference type="ChEBI" id="CHEBI:33019"/>
        <dbReference type="ChEBI" id="CHEBI:57502"/>
        <dbReference type="ChEBI" id="CHEBI:58437"/>
        <dbReference type="EC" id="2.7.7.18"/>
    </reaction>
</comment>
<comment type="pathway">
    <text evidence="1">Cofactor biosynthesis; NAD(+) biosynthesis; deamido-NAD(+) from nicotinate D-ribonucleotide: step 1/1.</text>
</comment>
<comment type="similarity">
    <text evidence="1">Belongs to the NadD family.</text>
</comment>
<comment type="sequence caution" evidence="2">
    <conflict type="erroneous initiation">
        <sequence resource="EMBL-CDS" id="ABL92797"/>
    </conflict>
</comment>
<dbReference type="EC" id="2.7.7.18" evidence="1"/>
<dbReference type="EMBL" id="CP000518">
    <property type="protein sequence ID" value="ABL92797.1"/>
    <property type="status" value="ALT_INIT"/>
    <property type="molecule type" value="Genomic_DNA"/>
</dbReference>
<dbReference type="SMR" id="A1UIY9"/>
<dbReference type="STRING" id="189918.Mkms_3603"/>
<dbReference type="KEGG" id="mkm:Mkms_3603"/>
<dbReference type="HOGENOM" id="CLU_069765_1_1_11"/>
<dbReference type="UniPathway" id="UPA00253">
    <property type="reaction ID" value="UER00332"/>
</dbReference>
<dbReference type="GO" id="GO:0005524">
    <property type="term" value="F:ATP binding"/>
    <property type="evidence" value="ECO:0007669"/>
    <property type="project" value="UniProtKB-KW"/>
</dbReference>
<dbReference type="GO" id="GO:0004515">
    <property type="term" value="F:nicotinate-nucleotide adenylyltransferase activity"/>
    <property type="evidence" value="ECO:0007669"/>
    <property type="project" value="UniProtKB-UniRule"/>
</dbReference>
<dbReference type="GO" id="GO:0009435">
    <property type="term" value="P:NAD biosynthetic process"/>
    <property type="evidence" value="ECO:0007669"/>
    <property type="project" value="UniProtKB-UniRule"/>
</dbReference>
<dbReference type="CDD" id="cd02165">
    <property type="entry name" value="NMNAT"/>
    <property type="match status" value="1"/>
</dbReference>
<dbReference type="FunFam" id="3.40.50.620:FF:000039">
    <property type="entry name" value="Probable nicotinate-nucleotide adenylyltransferase"/>
    <property type="match status" value="1"/>
</dbReference>
<dbReference type="Gene3D" id="3.40.50.620">
    <property type="entry name" value="HUPs"/>
    <property type="match status" value="1"/>
</dbReference>
<dbReference type="HAMAP" id="MF_00244">
    <property type="entry name" value="NaMN_adenylyltr"/>
    <property type="match status" value="1"/>
</dbReference>
<dbReference type="InterPro" id="IPR004821">
    <property type="entry name" value="Cyt_trans-like"/>
</dbReference>
<dbReference type="InterPro" id="IPR005248">
    <property type="entry name" value="NadD/NMNAT"/>
</dbReference>
<dbReference type="InterPro" id="IPR014729">
    <property type="entry name" value="Rossmann-like_a/b/a_fold"/>
</dbReference>
<dbReference type="NCBIfam" id="TIGR00125">
    <property type="entry name" value="cyt_tran_rel"/>
    <property type="match status" value="1"/>
</dbReference>
<dbReference type="NCBIfam" id="TIGR00482">
    <property type="entry name" value="nicotinate (nicotinamide) nucleotide adenylyltransferase"/>
    <property type="match status" value="1"/>
</dbReference>
<dbReference type="NCBIfam" id="NF000840">
    <property type="entry name" value="PRK00071.1-3"/>
    <property type="match status" value="1"/>
</dbReference>
<dbReference type="PANTHER" id="PTHR39321">
    <property type="entry name" value="NICOTINATE-NUCLEOTIDE ADENYLYLTRANSFERASE-RELATED"/>
    <property type="match status" value="1"/>
</dbReference>
<dbReference type="PANTHER" id="PTHR39321:SF3">
    <property type="entry name" value="PHOSPHOPANTETHEINE ADENYLYLTRANSFERASE"/>
    <property type="match status" value="1"/>
</dbReference>
<dbReference type="Pfam" id="PF01467">
    <property type="entry name" value="CTP_transf_like"/>
    <property type="match status" value="1"/>
</dbReference>
<dbReference type="SUPFAM" id="SSF52374">
    <property type="entry name" value="Nucleotidylyl transferase"/>
    <property type="match status" value="1"/>
</dbReference>
<protein>
    <recommendedName>
        <fullName evidence="1">Probable nicotinate-nucleotide adenylyltransferase</fullName>
        <ecNumber evidence="1">2.7.7.18</ecNumber>
    </recommendedName>
    <alternativeName>
        <fullName evidence="1">Deamido-NAD(+) diphosphorylase</fullName>
    </alternativeName>
    <alternativeName>
        <fullName evidence="1">Deamido-NAD(+) pyrophosphorylase</fullName>
    </alternativeName>
    <alternativeName>
        <fullName evidence="1">Nicotinate mononucleotide adenylyltransferase</fullName>
        <shortName evidence="1">NaMN adenylyltransferase</shortName>
    </alternativeName>
</protein>
<evidence type="ECO:0000255" key="1">
    <source>
        <dbReference type="HAMAP-Rule" id="MF_00244"/>
    </source>
</evidence>
<evidence type="ECO:0000305" key="2"/>
<keyword id="KW-0067">ATP-binding</keyword>
<keyword id="KW-0520">NAD</keyword>
<keyword id="KW-0547">Nucleotide-binding</keyword>
<keyword id="KW-0548">Nucleotidyltransferase</keyword>
<keyword id="KW-0662">Pyridine nucleotide biosynthesis</keyword>
<keyword id="KW-0808">Transferase</keyword>
<gene>
    <name evidence="1" type="primary">nadD</name>
    <name type="ordered locus">Mkms_3603</name>
</gene>
<sequence length="204" mass="22814">MGGTFDPIHHGHLVAASEVADLFDLDEVVFVPTGQPWQKHDRRVTAPEDRYLMTVIATASNPRFSVSRVDIDRGGPTYTKDTLRDLHELNPDADLYFITGADALGSILSWQNWEEMFSIARFVGVSRPGYELDGKHISAALRELPADALSLVEVPALAISSSDCRKRAVEARPIWYLVPDGVVQYVTKRRLYLPEPTPELRTPE</sequence>